<reference evidence="19" key="1">
    <citation type="journal article" date="2010" name="J. Bacteriol.">
        <title>Genome sequence of the obligate methanotroph Methylosinus trichosporium strain OB3b.</title>
        <authorList>
            <person name="Stein L.Y."/>
            <person name="Yoon S."/>
            <person name="Semrau J.D."/>
            <person name="Dispirito A.A."/>
            <person name="Murrell J.C."/>
            <person name="Vuilleumier S."/>
            <person name="Kalyuzhnaya M.G."/>
            <person name="Op den Camp H.J."/>
            <person name="Bringel F."/>
            <person name="Bruce D."/>
            <person name="Cheng J.F."/>
            <person name="Copeland A."/>
            <person name="Goodwin L."/>
            <person name="Han S."/>
            <person name="Hauser L."/>
            <person name="Jetten M.S."/>
            <person name="Lajus A."/>
            <person name="Land M.L."/>
            <person name="Lapidus A."/>
            <person name="Lucas S."/>
            <person name="Medigue C."/>
            <person name="Pitluck S."/>
            <person name="Woyke T."/>
            <person name="Zeytun A."/>
            <person name="Klotz M.G."/>
        </authorList>
    </citation>
    <scope>NUCLEOTIDE SEQUENCE [LARGE SCALE GENOMIC DNA]</scope>
    <source>
        <strain evidence="19">ATCC 35070 / NCIMB 11131 / ACM 3311 / OB3b</strain>
    </source>
</reference>
<reference evidence="18" key="2">
    <citation type="journal article" date="2004" name="Science">
        <title>Methanobactin, a copper-acquisition compound from methane-oxidizing bacteria.</title>
        <authorList>
            <person name="Kim H.J."/>
            <person name="Graham D.W."/>
            <person name="DiSpirito A.A."/>
            <person name="Alterman M.A."/>
            <person name="Galeva N."/>
            <person name="Larive C.K."/>
            <person name="Asunskis D."/>
            <person name="Sherwood P.M."/>
        </authorList>
    </citation>
    <scope>PARTIAL PROTEIN SEQUENCE</scope>
    <scope>FUNCTION</scope>
    <scope>SUBCELLULAR LOCATION</scope>
    <scope>MASS SPECTROMETRY</scope>
    <scope>X-RAY CRYSTALLOGRAPHY (1.15 ANGSTROMS) OF 20-30 IN COMPLEX WITH COPPER</scope>
    <scope>DISULFIDE BOND</scope>
    <scope>METAL-BINDING</scope>
    <scope>CROSS-LINKS</scope>
    <source>
        <strain evidence="1">ATCC 35070 / NCIMB 11131 / ACM 3311 / OB3b</strain>
    </source>
</reference>
<reference evidence="18" key="3">
    <citation type="journal article" date="2005" name="Biochemistry">
        <title>Purification and physical-chemical properties of methanobactin: a chalkophore from Methylosinus trichosporium OB3b.</title>
        <authorList>
            <person name="Kim H.J."/>
            <person name="Galeva N."/>
            <person name="Larive C.K."/>
            <person name="Alterman M."/>
            <person name="Graham D.W."/>
        </authorList>
    </citation>
    <scope>FUNCTION</scope>
    <scope>SUBUNIT</scope>
    <scope>SUBCELLULAR LOCATION</scope>
    <scope>INDUCTION</scope>
    <scope>MASS SPECTROMETRY</scope>
    <source>
        <strain evidence="2">ATCC 35070 / NCIMB 11131 / ACM 3311 / OB3b</strain>
    </source>
</reference>
<reference evidence="18" key="4">
    <citation type="journal article" date="2005" name="J. Am. Chem. Soc.">
        <title>The copper chelator methanobactin from Methylosinus trichosporium OB3b binds copper(I).</title>
        <authorList>
            <person name="Hakemian A.S."/>
            <person name="Tinberg C.E."/>
            <person name="Kondapalli K.C."/>
            <person name="Telser J."/>
            <person name="Hoffman B.M."/>
            <person name="Stemmler T.L."/>
            <person name="Rosenzweig A.C."/>
        </authorList>
    </citation>
    <scope>FUNCTION</scope>
    <scope>SUBUNIT</scope>
    <scope>SUBCELLULAR LOCATION</scope>
    <scope>MASS SPECTROMETRY</scope>
    <source>
        <strain evidence="4">ATCC 35070 / NCIMB 11131 / ACM 3311 / OB3b</strain>
    </source>
</reference>
<reference evidence="18" key="5">
    <citation type="journal article" date="2005" name="Microbiology">
        <title>Effect of methanobactin on the activity and electron paramagnetic resonance spectra of the membrane-associated methane monooxygenase in Methylococcus capsulatus Bath.</title>
        <authorList>
            <person name="Choi D.W."/>
            <person name="Antholine W.E."/>
            <person name="Do Y.S."/>
            <person name="Semrau J.D."/>
            <person name="Kisting C.J."/>
            <person name="Kunz R.C."/>
            <person name="Campbell D."/>
            <person name="Rao V."/>
            <person name="Hartsel S.C."/>
            <person name="DiSpirito A.A."/>
        </authorList>
    </citation>
    <scope>FUNCTION</scope>
    <scope>SUBUNIT</scope>
    <scope>SUBCELLULAR LOCATION</scope>
    <source>
        <strain evidence="3">ATCC 35070 / NCIMB 11131 / ACM 3311 / OB3b</strain>
    </source>
</reference>
<reference evidence="18" key="6">
    <citation type="journal article" date="2006" name="Biochemistry">
        <title>Spectral, kinetic, and thermodynamic properties of Cu(I) and Cu(II) binding by methanobactin from Methylosinus trichosporium OB3b.</title>
        <authorList>
            <person name="Choi D.W."/>
            <person name="Zea C.J."/>
            <person name="Do Y.S."/>
            <person name="Semrau J.D."/>
            <person name="Antholine W.E."/>
            <person name="Hargrove M.S."/>
            <person name="Pohl N.L."/>
            <person name="Boyd E.S."/>
            <person name="Geesey G.G."/>
            <person name="Hartsel S.C."/>
            <person name="Shafe P.H."/>
            <person name="McEllistrem M.T."/>
            <person name="Kisting C.J."/>
            <person name="Campbell D."/>
            <person name="Rao V."/>
            <person name="de la Mora A.M."/>
            <person name="Dispirito A.A."/>
        </authorList>
    </citation>
    <scope>FUNCTION</scope>
    <scope>SUBCELLULAR LOCATION</scope>
    <source>
        <strain evidence="5">ATCC 35070 / NCIMB 11131 / ACM 3311 / OB3b</strain>
    </source>
</reference>
<reference evidence="18" key="7">
    <citation type="journal article" date="2006" name="J. Inorg. Biochem.">
        <title>Spectral and thermodynamic properties of Ag(I), Au(III), Cd(II), Co(II), Fe(III), Hg(II), Mn(II), Ni(II), Pb(II), U(IV), and Zn(II) binding by methanobactin from Methylosinus trichosporium OB3b.</title>
        <authorList>
            <person name="Choi D.W."/>
            <person name="Do Y.S."/>
            <person name="Zea C.J."/>
            <person name="McEllistrem M.T."/>
            <person name="Lee S.W."/>
            <person name="Semrau J.D."/>
            <person name="Pohl N.L."/>
            <person name="Kisting C.J."/>
            <person name="Scardino L.L."/>
            <person name="Hartsel S.C."/>
            <person name="Boyd E.S."/>
            <person name="Geesey G.G."/>
            <person name="Riedel T.P."/>
            <person name="Shafe P.H."/>
            <person name="Kranski K.A."/>
            <person name="Tritsch J.R."/>
            <person name="Antholine W.E."/>
            <person name="DiSpirito A.A."/>
        </authorList>
    </citation>
    <scope>FUNCTION</scope>
    <scope>SUBCELLULAR LOCATION</scope>
    <source>
        <strain evidence="6">ATCC 35070 / NCIMB 11131 / ACM 3311 / OB3b</strain>
    </source>
</reference>
<reference evidence="18" key="8">
    <citation type="journal article" date="2007" name="Proc. Natl. Acad. Sci. U.S.A.">
        <title>Methane monooxygenase gene expression mediated by methanobactin in the presence of mineral copper sources.</title>
        <authorList>
            <person name="Knapp C.W."/>
            <person name="Fowle D.A."/>
            <person name="Kulczycki E."/>
            <person name="Roberts J.A."/>
            <person name="Graham D.W."/>
        </authorList>
    </citation>
    <scope>FUNCTION</scope>
    <scope>SUBCELLULAR LOCATION</scope>
    <source>
        <strain evidence="7">ATCC 35070 / NCIMB 11131 / ACM 3311 / OB3b</strain>
    </source>
</reference>
<reference evidence="18" key="9">
    <citation type="journal article" date="2008" name="J. Inorg. Biochem.">
        <title>Oxidase, superoxide dismutase, and hydrogen peroxide reductase activities of methanobactin from types I and II methanotrophs.</title>
        <authorList>
            <person name="Choi D.W."/>
            <person name="Semrau J.D."/>
            <person name="Antholine W.E."/>
            <person name="Hartsel S.C."/>
            <person name="Anderson R.C."/>
            <person name="Carey J.N."/>
            <person name="Dreis A.M."/>
            <person name="Kenseth E.M."/>
            <person name="Renstrom J.M."/>
            <person name="Scardino L.L."/>
            <person name="Van Gorden G.S."/>
            <person name="Volkert A.A."/>
            <person name="Wingad A.D."/>
            <person name="Yanzer P.J."/>
            <person name="McEllistrem M.T."/>
            <person name="de la Mora A.M."/>
            <person name="DiSpirito A.A."/>
        </authorList>
    </citation>
    <scope>FUNCTION</scope>
    <scope>CATALYTIC ACTIVITY</scope>
    <scope>SUBCELLULAR LOCATION</scope>
    <source>
        <strain evidence="8">ATCC 35070 / NCIMB 11131 / ACM 3311 / OB3b</strain>
    </source>
</reference>
<reference evidence="18" key="10">
    <citation type="journal article" date="2010" name="Biochemistry">
        <title>A comparison of methanobactins from Methylosinus trichosporium OB3b and Methylocystis strain Sb2 predicts methanobactins are synthesized from diverse peptide precursors modified to create a common core for binding and reducing copper ions.</title>
        <authorList>
            <person name="Krentz B.D."/>
            <person name="Mulheron H.J."/>
            <person name="Semrau J.D."/>
            <person name="Dispirito A.A."/>
            <person name="Bandow N.L."/>
            <person name="Haft D.H."/>
            <person name="Vuilleumier S."/>
            <person name="Murrell J.C."/>
            <person name="McEllistrem M.T."/>
            <person name="Hartsel S.C."/>
            <person name="Gallagher W.H."/>
        </authorList>
    </citation>
    <scope>IDENTIFICATION</scope>
    <scope>FUNCTION</scope>
    <scope>SUBCELLULAR LOCATION</scope>
    <source>
        <strain evidence="11">ATCC 35070 / NCIMB 11131 / ACM 3311 / OB3b</strain>
    </source>
</reference>
<reference evidence="18" key="11">
    <citation type="journal article" date="2010" name="J. Inorg. Biochem.">
        <title>Spectral and thermodynamic properties of methanobactin from gamma-proteobacterial methane oxidizing bacteria: a case for copper competition on a molecular level.</title>
        <authorList>
            <person name="Choi D.W."/>
            <person name="Bandow N.L."/>
            <person name="McEllistrem M.T."/>
            <person name="Semrau J.D."/>
            <person name="Antholine W.E."/>
            <person name="Hartsel S.C."/>
            <person name="Gallagher W."/>
            <person name="Zea C.J."/>
            <person name="Pohl N.L."/>
            <person name="Zahn J.A."/>
            <person name="DiSpirito A.A."/>
        </authorList>
    </citation>
    <scope>FUNCTION</scope>
    <scope>INDUCTION</scope>
    <scope>SUBCELLULAR LOCATION</scope>
    <source>
        <strain evidence="10">ATCC 35070 / NCIMB 11131 / ACM 3311 / OB3b</strain>
    </source>
</reference>
<reference evidence="18" key="12">
    <citation type="journal article" date="2011" name="Geochem. Trans.">
        <title>Isolation and purification of Cu-free methanobactin from Methylosinus trichosporium OB3b.</title>
        <authorList>
            <person name="Pesch M.L."/>
            <person name="Christl I."/>
            <person name="Barmettler K."/>
            <person name="Kraemer S.M."/>
            <person name="Kretzschmar R."/>
        </authorList>
    </citation>
    <scope>SUBCELLULAR LOCATION</scope>
    <scope>MASS SPECTROMETRY</scope>
    <source>
        <strain evidence="14">ATCC 35070 / NCIMB 11131 / ACM 3311 / OB3b</strain>
    </source>
</reference>
<reference evidence="20 21" key="13">
    <citation type="journal article" date="2011" name="Inorg. Chem.">
        <title>Copper-binding properties and structures of methanobactins from Methylosinus trichosporium OB3b.</title>
        <authorList>
            <person name="El Ghazouani A."/>
            <person name="Basle A."/>
            <person name="Firbank S.J."/>
            <person name="Knapp C.W."/>
            <person name="Gray J."/>
            <person name="Graham D.W."/>
            <person name="Dennison C."/>
        </authorList>
    </citation>
    <scope>FUNCTION</scope>
    <scope>SUBCELLULAR LOCATION</scope>
    <scope>MASS SPECTROMETRY</scope>
    <scope>X-RAY CRYSTALLOGRAPHY (0.9 ANGSTROMS) OF 20-30 IN COMPLEX WITH COPPER</scope>
    <scope>DISULFIDE BOND</scope>
    <scope>METAL-BINDING</scope>
    <scope>CROSS-LINKS</scope>
    <source>
        <strain evidence="13">ATCC 35070 / NCIMB 11131 / ACM 3311 / OB3b</strain>
    </source>
</reference>
<reference evidence="18" key="14">
    <citation type="journal article" date="2011" name="J. Biol. Chem.">
        <title>Dual pathways for copper uptake by methanotrophic bacteria.</title>
        <authorList>
            <person name="Balasubramanian R."/>
            <person name="Kenney G.E."/>
            <person name="Rosenzweig A.C."/>
        </authorList>
    </citation>
    <scope>FUNCTION</scope>
    <scope>SUBCELLULAR LOCATION</scope>
    <scope>MASS SPECTROMETRY</scope>
    <source>
        <strain evidence="15">ATCC 35070 / NCIMB 11131 / ACM 3311 / OB3b</strain>
    </source>
</reference>
<reference evidence="18" key="15">
    <citation type="journal article" date="2011" name="J. Trace Elem. Med. Biol.">
        <title>The biogenic methanobactin is an effective chelator for copper in a rat model for Wilson disease.</title>
        <authorList>
            <person name="Summer K.H."/>
            <person name="Lichtmannegger J."/>
            <person name="Bandow N."/>
            <person name="Choi D.W."/>
            <person name="DiSpirito A.A."/>
            <person name="Michalke B."/>
        </authorList>
    </citation>
    <scope>FUNCTION</scope>
    <scope>SUBCELLULAR LOCATION</scope>
    <source>
        <strain evidence="12">ATCC 35070 / NCIMB 11131 / ACM 3311 / OB3b</strain>
    </source>
</reference>
<reference evidence="18" key="16">
    <citation type="journal article" date="2008" name="J. Am. Chem. Soc.">
        <title>NMR, mass spectrometry and chemical evidence reveal a different chemical structure for methanobactin that contains oxazolone rings.</title>
        <authorList>
            <person name="Behling L.A."/>
            <person name="Hartsel S.C."/>
            <person name="Lewis D.E."/>
            <person name="DiSpirito A.A."/>
            <person name="Choi D.W."/>
            <person name="Masterson L.R."/>
            <person name="Veglia G."/>
            <person name="Gallagher W.H."/>
        </authorList>
    </citation>
    <scope>STRUCTURE BY NMR OF 20-30 IN COMPLEX WITH COPPER</scope>
    <scope>DISULFIDE BOND</scope>
    <scope>METAL-BINDING</scope>
    <scope>CROSS-LINKS</scope>
    <source>
        <strain evidence="9">ATCC 35070 / NCIMB 11131 / ACM 3311 / OB3b</strain>
    </source>
</reference>
<protein>
    <recommendedName>
        <fullName evidence="16 19">Methanobactin mb-OB3b</fullName>
    </recommendedName>
    <alternativeName>
        <fullName evidence="16">Copper-binding compound</fullName>
        <shortName evidence="16">CBC</shortName>
    </alternativeName>
    <alternativeName>
        <fullName evidence="17">Hydrogen peroxide reductase</fullName>
        <ecNumber evidence="8">1.11.1.-</ecNumber>
    </alternativeName>
    <alternativeName>
        <fullName evidence="17">Superoxide dismutase</fullName>
        <ecNumber evidence="8">1.15.1.1</ecNumber>
    </alternativeName>
</protein>
<organism>
    <name type="scientific">Methylosinus trichosporium</name>
    <dbReference type="NCBI Taxonomy" id="426"/>
    <lineage>
        <taxon>Bacteria</taxon>
        <taxon>Pseudomonadati</taxon>
        <taxon>Pseudomonadota</taxon>
        <taxon>Alphaproteobacteria</taxon>
        <taxon>Hyphomicrobiales</taxon>
        <taxon>Methylocystaceae</taxon>
        <taxon>Methylosinus</taxon>
    </lineage>
</organism>
<evidence type="ECO:0000269" key="1">
    <source>
    </source>
</evidence>
<evidence type="ECO:0000269" key="2">
    <source>
    </source>
</evidence>
<evidence type="ECO:0000269" key="3">
    <source>
    </source>
</evidence>
<evidence type="ECO:0000269" key="4">
    <source>
    </source>
</evidence>
<evidence type="ECO:0000269" key="5">
    <source>
    </source>
</evidence>
<evidence type="ECO:0000269" key="6">
    <source>
    </source>
</evidence>
<evidence type="ECO:0000269" key="7">
    <source>
    </source>
</evidence>
<evidence type="ECO:0000269" key="8">
    <source>
    </source>
</evidence>
<evidence type="ECO:0000269" key="9">
    <source>
    </source>
</evidence>
<evidence type="ECO:0000269" key="10">
    <source>
    </source>
</evidence>
<evidence type="ECO:0000269" key="11">
    <source>
    </source>
</evidence>
<evidence type="ECO:0000269" key="12">
    <source>
    </source>
</evidence>
<evidence type="ECO:0000269" key="13">
    <source>
    </source>
</evidence>
<evidence type="ECO:0000269" key="14">
    <source>
    </source>
</evidence>
<evidence type="ECO:0000269" key="15">
    <source>
    </source>
</evidence>
<evidence type="ECO:0000303" key="16">
    <source>
    </source>
</evidence>
<evidence type="ECO:0000303" key="17">
    <source>
    </source>
</evidence>
<evidence type="ECO:0000305" key="18"/>
<evidence type="ECO:0000312" key="19">
    <source>
        <dbReference type="EMBL" id="EFS20503.1"/>
    </source>
</evidence>
<evidence type="ECO:0007744" key="20">
    <source>
        <dbReference type="PDB" id="2XJH"/>
    </source>
</evidence>
<evidence type="ECO:0007744" key="21">
    <source>
        <dbReference type="PDB" id="2XJI"/>
    </source>
</evidence>
<proteinExistence type="evidence at protein level"/>
<dbReference type="EC" id="1.11.1.-" evidence="8"/>
<dbReference type="EC" id="1.15.1.1" evidence="8"/>
<dbReference type="EMBL" id="ADVE01000073">
    <property type="protein sequence ID" value="EFS20503.1"/>
    <property type="molecule type" value="Genomic_DNA"/>
</dbReference>
<dbReference type="PDB" id="2XJH">
    <property type="method" value="X-ray"/>
    <property type="resolution" value="0.92 A"/>
    <property type="chains" value="A/B=21-30"/>
</dbReference>
<dbReference type="PDB" id="2XJI">
    <property type="method" value="X-ray"/>
    <property type="resolution" value="1.00 A"/>
    <property type="chains" value="A/B/C/D/E/F=21-30"/>
</dbReference>
<dbReference type="PDBsum" id="2XJH"/>
<dbReference type="PDBsum" id="2XJI"/>
<dbReference type="SMR" id="E3YBA4"/>
<dbReference type="EvolutionaryTrace" id="E3YBA4"/>
<dbReference type="GO" id="GO:0005737">
    <property type="term" value="C:cytoplasm"/>
    <property type="evidence" value="ECO:0007669"/>
    <property type="project" value="UniProtKB-SubCell"/>
</dbReference>
<dbReference type="GO" id="GO:0005576">
    <property type="term" value="C:extracellular region"/>
    <property type="evidence" value="ECO:0007669"/>
    <property type="project" value="UniProtKB-SubCell"/>
</dbReference>
<dbReference type="GO" id="GO:0046872">
    <property type="term" value="F:metal ion binding"/>
    <property type="evidence" value="ECO:0007669"/>
    <property type="project" value="UniProtKB-KW"/>
</dbReference>
<dbReference type="GO" id="GO:0004601">
    <property type="term" value="F:peroxidase activity"/>
    <property type="evidence" value="ECO:0007669"/>
    <property type="project" value="UniProtKB-KW"/>
</dbReference>
<dbReference type="GO" id="GO:0004784">
    <property type="term" value="F:superoxide dismutase activity"/>
    <property type="evidence" value="ECO:0007669"/>
    <property type="project" value="UniProtKB-EC"/>
</dbReference>
<dbReference type="GO" id="GO:0006825">
    <property type="term" value="P:copper ion transport"/>
    <property type="evidence" value="ECO:0007669"/>
    <property type="project" value="UniProtKB-KW"/>
</dbReference>
<dbReference type="InterPro" id="IPR023963">
    <property type="entry name" value="Methanobactin_OB3b"/>
</dbReference>
<dbReference type="NCBIfam" id="TIGR04071">
    <property type="entry name" value="methanobac_OB3b"/>
    <property type="match status" value="1"/>
</dbReference>
<gene>
    <name evidence="19" type="primary">mbnA</name>
    <name type="ORF">MettrDRAFT_4473</name>
</gene>
<comment type="function">
    <text evidence="1 2 3 4 5 6 7 8 10 11 12 13 15">Chalkophore involved in scavenging, uptake and suppression of toxicity of copper. Each apo-methanobactin (apo-mb) complexes 1 Cu(2+) or Cu(1+) ion to form Cu(1+)-mb (Cu-mb) which is then taken up by the cell. Enhances growth rate in the presence of copper and reduces growth lag upon exposition to elevated levels of copper. Cu-mb contributes to the switchover from soluble methane monooxygenase (sMMO) to the membrane-bound particulate MMO (pMMO) by inducing transcription of pMMO subunit A. It also stimulates the enzymatic activity of pMMO. In the absence of copper, binds other metal ions, like Zn(2+), Ag(1+), Au(3+), Co(2+), Cd(2+), Fe(3+), Hg(2+), Mn(2+), Ni(2+), Pb(2+) or U(6+), but not Ba(2+), Ca(2+), La(2+), Mg(2+) or Sr(2+). Uptake is an active process, which may involve TonB-dependent transporters, and as such does not involve porins. Cu-Mb can be taken up by other methanotrophic bacteria but not by E.coli. Has Cu-dependent superoxide dismutase-like activity. Shows reductant-dependent oxidase and hydrogen peroxide reductase activities. Reduces copper-levels in liver in a rat model of Wilson disease.</text>
</comment>
<comment type="catalytic activity">
    <reaction evidence="8">
        <text>2 superoxide + 2 H(+) = H2O2 + O2</text>
        <dbReference type="Rhea" id="RHEA:20696"/>
        <dbReference type="ChEBI" id="CHEBI:15378"/>
        <dbReference type="ChEBI" id="CHEBI:15379"/>
        <dbReference type="ChEBI" id="CHEBI:16240"/>
        <dbReference type="ChEBI" id="CHEBI:18421"/>
        <dbReference type="EC" id="1.15.1.1"/>
    </reaction>
</comment>
<comment type="subunit">
    <text evidence="1 2 3 4 9 13">Monomer. In the absence of copper, may exist as a dimer or an oligomer.</text>
</comment>
<comment type="subcellular location">
    <subcellularLocation>
        <location>Secreted</location>
    </subcellularLocation>
    <subcellularLocation>
        <location>Cytoplasm</location>
    </subcellularLocation>
    <text>Secreted as apo-mb, uptake into the cytoplasm in complex with copper as Cu-mb. In the cytoplasm, Cu-mb is associated with the cell membrane.</text>
</comment>
<comment type="induction">
    <text evidence="2 10">By low copper concentrations.</text>
</comment>
<comment type="mass spectrometry">
    <text>In complex with copper.</text>
</comment>
<comment type="mass spectrometry">
    <text>In complex with copper.</text>
</comment>
<comment type="mass spectrometry">
    <text>In complex with copper.</text>
</comment>
<comment type="mass spectrometry">
    <text>In complex with copper.</text>
</comment>
<comment type="mass spectrometry">
    <text>In complex with copper.</text>
</comment>
<comment type="mass spectrometry">
    <text>Without copper.</text>
</comment>
<comment type="mass spectrometry">
    <text>Without copper.</text>
</comment>
<comment type="mass spectrometry">
    <text>Without copper.</text>
</comment>
<comment type="mass spectrometry">
    <text>Without copper.</text>
</comment>
<comment type="caution">
    <text evidence="18">The rearrangement modifications of the Cys residues involved in the cross-links has not been described and the structure may be subject to revision.</text>
</comment>
<sequence>MTVKIAQKKVLPVIGRAAALCGSCYPCSCM</sequence>
<feature type="propeptide" id="PRO_0000415151" evidence="11">
    <location>
        <begin position="1"/>
        <end position="19"/>
    </location>
</feature>
<feature type="peptide" id="PRO_0000415152" description="Methanobactin mb-OB3b" evidence="11">
    <location>
        <begin position="20"/>
        <end position="30"/>
    </location>
</feature>
<feature type="binding site" evidence="1 9 13 20 21">
    <location>
        <position position="21"/>
    </location>
    <ligand>
        <name>Cu(2+)</name>
        <dbReference type="ChEBI" id="CHEBI:29036"/>
    </ligand>
</feature>
<feature type="binding site" evidence="1 9 13 20 21">
    <location>
        <position position="27"/>
    </location>
    <ligand>
        <name>Cu(2+)</name>
        <dbReference type="ChEBI" id="CHEBI:29036"/>
    </ligand>
</feature>
<feature type="disulfide bond" evidence="1 9 13">
    <location>
        <begin position="24"/>
        <end position="29"/>
    </location>
</feature>
<feature type="cross-link" description="2-(3-methylbutanoyl)-5-hydroxyoxazole-4-carbothionic acid (Leu-Cys)" evidence="1 9 13">
    <location>
        <begin position="20"/>
        <end position="21"/>
    </location>
</feature>
<feature type="cross-link" description="Proline 5-hydroxy-oxazole-4-carbothionic acid (Pro-Cys)">
    <location>
        <begin position="26"/>
        <end position="27"/>
    </location>
</feature>
<accession>E3YBA4</accession>
<keyword id="KW-0002">3D-structure</keyword>
<keyword id="KW-0186">Copper</keyword>
<keyword id="KW-0187">Copper transport</keyword>
<keyword id="KW-0963">Cytoplasm</keyword>
<keyword id="KW-0903">Direct protein sequencing</keyword>
<keyword id="KW-1015">Disulfide bond</keyword>
<keyword id="KW-0406">Ion transport</keyword>
<keyword id="KW-0479">Metal-binding</keyword>
<keyword id="KW-0560">Oxidoreductase</keyword>
<keyword id="KW-0575">Peroxidase</keyword>
<keyword id="KW-0964">Secreted</keyword>
<keyword id="KW-0813">Transport</keyword>
<name>MBCTN_METTR</name>